<dbReference type="EC" id="2.7.7.60" evidence="1"/>
<dbReference type="EMBL" id="CP000802">
    <property type="protein sequence ID" value="ABV07130.1"/>
    <property type="molecule type" value="Genomic_DNA"/>
</dbReference>
<dbReference type="RefSeq" id="WP_000246138.1">
    <property type="nucleotide sequence ID" value="NC_009800.1"/>
</dbReference>
<dbReference type="SMR" id="A8A3M6"/>
<dbReference type="GeneID" id="93779259"/>
<dbReference type="KEGG" id="ecx:EcHS_A2885"/>
<dbReference type="HOGENOM" id="CLU_061281_3_1_6"/>
<dbReference type="UniPathway" id="UPA00056">
    <property type="reaction ID" value="UER00093"/>
</dbReference>
<dbReference type="GO" id="GO:0050518">
    <property type="term" value="F:2-C-methyl-D-erythritol 4-phosphate cytidylyltransferase activity"/>
    <property type="evidence" value="ECO:0007669"/>
    <property type="project" value="UniProtKB-UniRule"/>
</dbReference>
<dbReference type="GO" id="GO:0019288">
    <property type="term" value="P:isopentenyl diphosphate biosynthetic process, methylerythritol 4-phosphate pathway"/>
    <property type="evidence" value="ECO:0007669"/>
    <property type="project" value="UniProtKB-UniRule"/>
</dbReference>
<dbReference type="CDD" id="cd02516">
    <property type="entry name" value="CDP-ME_synthetase"/>
    <property type="match status" value="1"/>
</dbReference>
<dbReference type="FunFam" id="3.90.550.10:FF:000003">
    <property type="entry name" value="2-C-methyl-D-erythritol 4-phosphate cytidylyltransferase"/>
    <property type="match status" value="1"/>
</dbReference>
<dbReference type="Gene3D" id="3.90.550.10">
    <property type="entry name" value="Spore Coat Polysaccharide Biosynthesis Protein SpsA, Chain A"/>
    <property type="match status" value="1"/>
</dbReference>
<dbReference type="HAMAP" id="MF_00108">
    <property type="entry name" value="IspD"/>
    <property type="match status" value="1"/>
</dbReference>
<dbReference type="InterPro" id="IPR001228">
    <property type="entry name" value="IspD"/>
</dbReference>
<dbReference type="InterPro" id="IPR034683">
    <property type="entry name" value="IspD/TarI"/>
</dbReference>
<dbReference type="InterPro" id="IPR050088">
    <property type="entry name" value="IspD/TarI_cytidylyltransf_bact"/>
</dbReference>
<dbReference type="InterPro" id="IPR018294">
    <property type="entry name" value="ISPD_synthase_CS"/>
</dbReference>
<dbReference type="InterPro" id="IPR029044">
    <property type="entry name" value="Nucleotide-diphossugar_trans"/>
</dbReference>
<dbReference type="NCBIfam" id="TIGR00453">
    <property type="entry name" value="ispD"/>
    <property type="match status" value="1"/>
</dbReference>
<dbReference type="PANTHER" id="PTHR32125">
    <property type="entry name" value="2-C-METHYL-D-ERYTHRITOL 4-PHOSPHATE CYTIDYLYLTRANSFERASE, CHLOROPLASTIC"/>
    <property type="match status" value="1"/>
</dbReference>
<dbReference type="PANTHER" id="PTHR32125:SF4">
    <property type="entry name" value="2-C-METHYL-D-ERYTHRITOL 4-PHOSPHATE CYTIDYLYLTRANSFERASE, CHLOROPLASTIC"/>
    <property type="match status" value="1"/>
</dbReference>
<dbReference type="Pfam" id="PF01128">
    <property type="entry name" value="IspD"/>
    <property type="match status" value="1"/>
</dbReference>
<dbReference type="SUPFAM" id="SSF53448">
    <property type="entry name" value="Nucleotide-diphospho-sugar transferases"/>
    <property type="match status" value="1"/>
</dbReference>
<dbReference type="PROSITE" id="PS01295">
    <property type="entry name" value="ISPD"/>
    <property type="match status" value="1"/>
</dbReference>
<organism>
    <name type="scientific">Escherichia coli O9:H4 (strain HS)</name>
    <dbReference type="NCBI Taxonomy" id="331112"/>
    <lineage>
        <taxon>Bacteria</taxon>
        <taxon>Pseudomonadati</taxon>
        <taxon>Pseudomonadota</taxon>
        <taxon>Gammaproteobacteria</taxon>
        <taxon>Enterobacterales</taxon>
        <taxon>Enterobacteriaceae</taxon>
        <taxon>Escherichia</taxon>
    </lineage>
</organism>
<accession>A8A3M6</accession>
<gene>
    <name evidence="1" type="primary">ispD</name>
    <name type="ordered locus">EcHS_A2885</name>
</gene>
<reference key="1">
    <citation type="journal article" date="2008" name="J. Bacteriol.">
        <title>The pangenome structure of Escherichia coli: comparative genomic analysis of E. coli commensal and pathogenic isolates.</title>
        <authorList>
            <person name="Rasko D.A."/>
            <person name="Rosovitz M.J."/>
            <person name="Myers G.S.A."/>
            <person name="Mongodin E.F."/>
            <person name="Fricke W.F."/>
            <person name="Gajer P."/>
            <person name="Crabtree J."/>
            <person name="Sebaihia M."/>
            <person name="Thomson N.R."/>
            <person name="Chaudhuri R."/>
            <person name="Henderson I.R."/>
            <person name="Sperandio V."/>
            <person name="Ravel J."/>
        </authorList>
    </citation>
    <scope>NUCLEOTIDE SEQUENCE [LARGE SCALE GENOMIC DNA]</scope>
    <source>
        <strain>HS</strain>
    </source>
</reference>
<protein>
    <recommendedName>
        <fullName evidence="1">2-C-methyl-D-erythritol 4-phosphate cytidylyltransferase</fullName>
        <ecNumber evidence="1">2.7.7.60</ecNumber>
    </recommendedName>
    <alternativeName>
        <fullName evidence="1">4-diphosphocytidyl-2C-methyl-D-erythritol synthase</fullName>
    </alternativeName>
    <alternativeName>
        <fullName evidence="1">MEP cytidylyltransferase</fullName>
        <shortName evidence="1">MCT</shortName>
    </alternativeName>
</protein>
<proteinExistence type="inferred from homology"/>
<name>ISPD_ECOHS</name>
<keyword id="KW-0414">Isoprene biosynthesis</keyword>
<keyword id="KW-0548">Nucleotidyltransferase</keyword>
<keyword id="KW-0808">Transferase</keyword>
<feature type="chain" id="PRO_1000057717" description="2-C-methyl-D-erythritol 4-phosphate cytidylyltransferase">
    <location>
        <begin position="1"/>
        <end position="236"/>
    </location>
</feature>
<feature type="site" description="Transition state stabilizer" evidence="1">
    <location>
        <position position="20"/>
    </location>
</feature>
<feature type="site" description="Transition state stabilizer" evidence="1">
    <location>
        <position position="27"/>
    </location>
</feature>
<feature type="site" description="Positions MEP for the nucleophilic attack" evidence="1">
    <location>
        <position position="157"/>
    </location>
</feature>
<feature type="site" description="Positions MEP for the nucleophilic attack" evidence="1">
    <location>
        <position position="213"/>
    </location>
</feature>
<sequence>MATTHLDVCAVVPAAGFGRRMQTECPKQYLSIGNQTILEHSVHALLAHPRVKRVVIAISPGDSRFAQLPLANHPQITVVDGGDERADSVLAGLKAAGDAQWVLVHDAARPCLHQDDLARLLALSETSRTGGILAAPVRDTMKRAEPGKNAIAHTVDRNGLWHALTPQFFPRELLHDCLTRALNEGATITDEASALEYCGFHPQLVEGRADNIKVTRPEDLALAEFYLTRTIHQENT</sequence>
<evidence type="ECO:0000255" key="1">
    <source>
        <dbReference type="HAMAP-Rule" id="MF_00108"/>
    </source>
</evidence>
<comment type="function">
    <text evidence="1">Catalyzes the formation of 4-diphosphocytidyl-2-C-methyl-D-erythritol from CTP and 2-C-methyl-D-erythritol 4-phosphate (MEP).</text>
</comment>
<comment type="catalytic activity">
    <reaction evidence="1">
        <text>2-C-methyl-D-erythritol 4-phosphate + CTP + H(+) = 4-CDP-2-C-methyl-D-erythritol + diphosphate</text>
        <dbReference type="Rhea" id="RHEA:13429"/>
        <dbReference type="ChEBI" id="CHEBI:15378"/>
        <dbReference type="ChEBI" id="CHEBI:33019"/>
        <dbReference type="ChEBI" id="CHEBI:37563"/>
        <dbReference type="ChEBI" id="CHEBI:57823"/>
        <dbReference type="ChEBI" id="CHEBI:58262"/>
        <dbReference type="EC" id="2.7.7.60"/>
    </reaction>
</comment>
<comment type="pathway">
    <text evidence="1">Isoprenoid biosynthesis; isopentenyl diphosphate biosynthesis via DXP pathway; isopentenyl diphosphate from 1-deoxy-D-xylulose 5-phosphate: step 2/6.</text>
</comment>
<comment type="subunit">
    <text evidence="1">Homodimer.</text>
</comment>
<comment type="similarity">
    <text evidence="1">Belongs to the IspD/TarI cytidylyltransferase family. IspD subfamily.</text>
</comment>